<reference key="1">
    <citation type="journal article" date="2004" name="Virology">
        <title>Genetic analysis of human H2N2 and early H3N2 influenza viruses, 1957-1972: evidence for genetic divergence and multiple reassortment events.</title>
        <authorList>
            <person name="Lindstrom S.E."/>
            <person name="Cox N.J."/>
            <person name="Klimov A."/>
        </authorList>
    </citation>
    <scope>NUCLEOTIDE SEQUENCE [GENOMIC RNA]</scope>
</reference>
<protein>
    <recommendedName>
        <fullName evidence="1">Nuclear export protein</fullName>
        <shortName evidence="1">NEP</shortName>
    </recommendedName>
    <alternativeName>
        <fullName evidence="1">Non-structural protein 2</fullName>
        <shortName evidence="1">NS2</shortName>
    </alternativeName>
</protein>
<evidence type="ECO:0000255" key="1">
    <source>
        <dbReference type="HAMAP-Rule" id="MF_04067"/>
    </source>
</evidence>
<keyword id="KW-0025">Alternative splicing</keyword>
<keyword id="KW-1048">Host nucleus</keyword>
<keyword id="KW-0945">Host-virus interaction</keyword>
<keyword id="KW-0813">Transport</keyword>
<keyword id="KW-0946">Virion</keyword>
<dbReference type="EMBL" id="AY210300">
    <property type="protein sequence ID" value="AAO46746.1"/>
    <property type="molecule type" value="Genomic_RNA"/>
</dbReference>
<dbReference type="SMR" id="Q6XSW5"/>
<dbReference type="GO" id="GO:0042025">
    <property type="term" value="C:host cell nucleus"/>
    <property type="evidence" value="ECO:0007669"/>
    <property type="project" value="UniProtKB-SubCell"/>
</dbReference>
<dbReference type="GO" id="GO:0044423">
    <property type="term" value="C:virion component"/>
    <property type="evidence" value="ECO:0007669"/>
    <property type="project" value="UniProtKB-UniRule"/>
</dbReference>
<dbReference type="GO" id="GO:0039675">
    <property type="term" value="P:exit of virus from host cell nucleus through nuclear pore"/>
    <property type="evidence" value="ECO:0007669"/>
    <property type="project" value="UniProtKB-UniRule"/>
</dbReference>
<dbReference type="Gene3D" id="1.10.287.230">
    <property type="match status" value="1"/>
</dbReference>
<dbReference type="Gene3D" id="1.10.287.10">
    <property type="entry name" value="S15/NS1, RNA-binding"/>
    <property type="match status" value="1"/>
</dbReference>
<dbReference type="HAMAP" id="MF_04067">
    <property type="entry name" value="INFV_NEP"/>
    <property type="match status" value="1"/>
</dbReference>
<dbReference type="InterPro" id="IPR000968">
    <property type="entry name" value="Flu_NS2"/>
</dbReference>
<dbReference type="Pfam" id="PF00601">
    <property type="entry name" value="Flu_NS2"/>
    <property type="match status" value="1"/>
</dbReference>
<dbReference type="SUPFAM" id="SSF101156">
    <property type="entry name" value="Nonstructural protein ns2, Nep, M1-binding domain"/>
    <property type="match status" value="1"/>
</dbReference>
<comment type="function">
    <text evidence="1">Mediates the nuclear export of encapsidated genomic RNAs (ribonucleoproteins, RNPs). Acts as an adapter between viral RNPs complexes and the nuclear export machinery of the cell. Possesses no intrinsic RNA-binding activity, but includes a C-terminal M1-binding domain. This domain is believed to allow recognition of RNPs bound to the protein M1. Since protein M1 is not available in large quantities before late stages of infection, such an indirect recognition mechanism probably ensures that genomic RNPs are not exported from the host nucleus until sufficient quantities of viral mRNA and progeny genomic RNA have been synthesized. Furthermore, the RNPs enter the host cytoplasm only when associated with the M1 protein that is necessary to guide them to the plasma membrane. May down-regulate viral RNA synthesis when overproduced.</text>
</comment>
<comment type="subunit">
    <text evidence="1">Interacts with protein M1. May interact with host nucleoporin RAB/HRB and exportin XPO1/CRM1.</text>
</comment>
<comment type="subcellular location">
    <subcellularLocation>
        <location evidence="1">Virion</location>
    </subcellularLocation>
    <subcellularLocation>
        <location evidence="1">Host nucleus</location>
    </subcellularLocation>
</comment>
<comment type="alternative products">
    <event type="alternative splicing"/>
    <isoform>
        <id>Q6XSW5-1</id>
        <name>NEP</name>
        <name>NS2</name>
        <sequence type="displayed"/>
    </isoform>
    <isoform>
        <id>Q6XSW4-1</id>
        <name>NS1</name>
        <sequence type="external"/>
    </isoform>
</comment>
<comment type="similarity">
    <text evidence="1">Belongs to the influenza viruses NEP family.</text>
</comment>
<name>NEP_I69A0</name>
<organism>
    <name type="scientific">Influenza A virus (strain A/England/878/1969 H3N2)</name>
    <dbReference type="NCBI Taxonomy" id="387147"/>
    <lineage>
        <taxon>Viruses</taxon>
        <taxon>Riboviria</taxon>
        <taxon>Orthornavirae</taxon>
        <taxon>Negarnaviricota</taxon>
        <taxon>Polyploviricotina</taxon>
        <taxon>Insthoviricetes</taxon>
        <taxon>Articulavirales</taxon>
        <taxon>Orthomyxoviridae</taxon>
        <taxon>Alphainfluenzavirus</taxon>
        <taxon>Alphainfluenzavirus influenzae</taxon>
        <taxon>Influenza A virus</taxon>
    </lineage>
</organism>
<proteinExistence type="inferred from homology"/>
<sequence length="121" mass="14379">MDSNTVSSFQDILLRMSKMRLGSSSEDLNGMITQFESLKIYRDSLGEAVMRMGDIHSLQNRNGKWREQLGQKFEEIRWLIEEVRHRLKITENSFEQITFMQALQLLFEVEQEIRTFSFQLI</sequence>
<feature type="chain" id="PRO_0000324204" description="Nuclear export protein">
    <location>
        <begin position="1"/>
        <end position="121"/>
    </location>
</feature>
<feature type="short sequence motif" description="Nuclear export signal" evidence="1">
    <location>
        <begin position="12"/>
        <end position="21"/>
    </location>
</feature>
<feature type="short sequence motif" description="Nuclear export signal" evidence="1">
    <location>
        <begin position="85"/>
        <end position="94"/>
    </location>
</feature>
<gene>
    <name evidence="1" type="primary">NS</name>
</gene>
<organismHost>
    <name type="scientific">Aves</name>
    <dbReference type="NCBI Taxonomy" id="8782"/>
</organismHost>
<organismHost>
    <name type="scientific">Homo sapiens</name>
    <name type="common">Human</name>
    <dbReference type="NCBI Taxonomy" id="9606"/>
</organismHost>
<organismHost>
    <name type="scientific">Mysticeti</name>
    <name type="common">baleen whales</name>
    <dbReference type="NCBI Taxonomy" id="9761"/>
</organismHost>
<organismHost>
    <name type="scientific">Phocidae</name>
    <name type="common">true seals</name>
    <dbReference type="NCBI Taxonomy" id="9709"/>
</organismHost>
<organismHost>
    <name type="scientific">Sus scrofa</name>
    <name type="common">Pig</name>
    <dbReference type="NCBI Taxonomy" id="9823"/>
</organismHost>
<accession>Q6XSW5</accession>